<gene>
    <name type="primary">Srsf10</name>
    <name type="synonym">Fusip1</name>
    <name type="synonym">Nssr</name>
    <name type="synonym">Sfrs13a</name>
    <name type="synonym">Srsf13a</name>
</gene>
<comment type="function">
    <text evidence="1 4">Splicing factor that in its dephosphorylated form acts as a general repressor of pre-mRNA splicing. Seems to interfere with the U1 snRNP 5'-splice recognition of SNRNP70. Required for splicing repression in M-phase cells and after heat shock. Also acts as a splicing factor that specifically promotes exon skipping during alternative splicing. Interaction with YTHDC1, a RNA-binding protein that recognizes and binds N6-methyladenosine (m6A)-containing RNAs, prevents SRSF10 from binding to its mRNA-binding sites close to m6A-containing regions, leading to inhibit exon skipping during alternative splicing (By similarity). May be involved in regulation of alternative splicing in neurons (PubMed:10583508).</text>
</comment>
<comment type="subunit">
    <text evidence="1">The phosphorylated but not the dephosphorylated form interacts with TRA2B/SFRS10. The dephosphorylated form interacts with SNRNP70. Interacts with FUS C-terminus. Interacts with YTHDC1, leading to inhibit RNA-binding activity of SRSF10.</text>
</comment>
<comment type="subcellular location">
    <subcellularLocation>
        <location evidence="4">Nucleus speckle</location>
    </subcellularLocation>
</comment>
<comment type="alternative products">
    <event type="alternative splicing"/>
    <isoform>
        <id>Q9R0U0-1</id>
        <name>1</name>
        <name>TASR-1</name>
        <name>NSSR1</name>
        <sequence type="displayed"/>
    </isoform>
    <isoform>
        <id>Q9R0U0-2</id>
        <name>2</name>
        <sequence type="described" ref="VSP_010426"/>
    </isoform>
    <isoform>
        <id>Q9R0U0-3</id>
        <name>3</name>
        <name>TASR-2</name>
        <name>NSSR2</name>
        <sequence type="described" ref="VSP_010427 VSP_010428"/>
    </isoform>
</comment>
<comment type="tissue specificity">
    <text evidence="4">Widely expressed, with high levels in brain and testis.</text>
</comment>
<comment type="PTM">
    <text evidence="1">Phosphorylated. Fully dephosphorylated in mitosis and partially dephosphorylated on heat shock.</text>
</comment>
<comment type="similarity">
    <text evidence="8">Belongs to the splicing factor SR family.</text>
</comment>
<proteinExistence type="evidence at protein level"/>
<organism>
    <name type="scientific">Mus musculus</name>
    <name type="common">Mouse</name>
    <dbReference type="NCBI Taxonomy" id="10090"/>
    <lineage>
        <taxon>Eukaryota</taxon>
        <taxon>Metazoa</taxon>
        <taxon>Chordata</taxon>
        <taxon>Craniata</taxon>
        <taxon>Vertebrata</taxon>
        <taxon>Euteleostomi</taxon>
        <taxon>Mammalia</taxon>
        <taxon>Eutheria</taxon>
        <taxon>Euarchontoglires</taxon>
        <taxon>Glires</taxon>
        <taxon>Rodentia</taxon>
        <taxon>Myomorpha</taxon>
        <taxon>Muroidea</taxon>
        <taxon>Muridae</taxon>
        <taxon>Murinae</taxon>
        <taxon>Mus</taxon>
        <taxon>Mus</taxon>
    </lineage>
</organism>
<sequence>MSRYLRPPNTSLFVRNVADDTRSEDLRREFGRYGPIVDVYVPLDFYTRRPRGFAYVQFEDVRDAEDALHNLDRKWICGRQIEIQFAQGDRKTPNQMKAKEGRNVYSSSRYDDYDRYRRSRSRSYERRRSRSRSFDYNYRRSYSPRNSRPTGRPRRSRSHSDNDRFKHRNRSFSRSKSNSRSRSKSQPKKEMKAKSRSRSASHTKTRGTSKTDSKTHYKSGSRYEKESRKKEPPRSKSQSRSQSRSRSKSRSRSWTSPKSSGH</sequence>
<reference key="1">
    <citation type="journal article" date="1998" name="J. Biol. Chem.">
        <title>Oncoprotein TLS interacts with serine-arginine proteins involved in RNA splicing.</title>
        <authorList>
            <person name="Yang L."/>
            <person name="Embree L.J."/>
            <person name="Tsai S."/>
            <person name="Hickstein D.D."/>
        </authorList>
    </citation>
    <scope>NUCLEOTIDE SEQUENCE [MRNA] (ISOFORM 3)</scope>
</reference>
<reference key="2">
    <citation type="journal article" date="1999" name="Genes Cells">
        <title>Cloning and characterization of two neural-salient serine/arginine-rich (NSSR) proteins involved in the regulation of alternative splicing in neurones.</title>
        <authorList>
            <person name="Komatsu M."/>
            <person name="Kominami E."/>
            <person name="Arahata K."/>
            <person name="Tsukahara T."/>
        </authorList>
    </citation>
    <scope>NUCLEOTIDE SEQUENCE [MRNA] (ISOFORMS 1 AND 3)</scope>
    <scope>FUNCTION</scope>
    <scope>SUBCELLULAR LOCATION</scope>
    <scope>TISSUE SPECIFICITY</scope>
</reference>
<reference key="3">
    <citation type="journal article" date="2000" name="Mol. Cell. Biol.">
        <title>TLS-ERG leukemia fusion protein inhibits RNA splicing mediated by serine-arginine proteins.</title>
        <authorList>
            <person name="Yang L."/>
            <person name="Embree L.J."/>
            <person name="Hickstein D.D."/>
        </authorList>
    </citation>
    <scope>NUCLEOTIDE SEQUENCE [MRNA] (ISOFORM 1)</scope>
</reference>
<reference key="4">
    <citation type="journal article" date="2005" name="Science">
        <title>The transcriptional landscape of the mammalian genome.</title>
        <authorList>
            <person name="Carninci P."/>
            <person name="Kasukawa T."/>
            <person name="Katayama S."/>
            <person name="Gough J."/>
            <person name="Frith M.C."/>
            <person name="Maeda N."/>
            <person name="Oyama R."/>
            <person name="Ravasi T."/>
            <person name="Lenhard B."/>
            <person name="Wells C."/>
            <person name="Kodzius R."/>
            <person name="Shimokawa K."/>
            <person name="Bajic V.B."/>
            <person name="Brenner S.E."/>
            <person name="Batalov S."/>
            <person name="Forrest A.R."/>
            <person name="Zavolan M."/>
            <person name="Davis M.J."/>
            <person name="Wilming L.G."/>
            <person name="Aidinis V."/>
            <person name="Allen J.E."/>
            <person name="Ambesi-Impiombato A."/>
            <person name="Apweiler R."/>
            <person name="Aturaliya R.N."/>
            <person name="Bailey T.L."/>
            <person name="Bansal M."/>
            <person name="Baxter L."/>
            <person name="Beisel K.W."/>
            <person name="Bersano T."/>
            <person name="Bono H."/>
            <person name="Chalk A.M."/>
            <person name="Chiu K.P."/>
            <person name="Choudhary V."/>
            <person name="Christoffels A."/>
            <person name="Clutterbuck D.R."/>
            <person name="Crowe M.L."/>
            <person name="Dalla E."/>
            <person name="Dalrymple B.P."/>
            <person name="de Bono B."/>
            <person name="Della Gatta G."/>
            <person name="di Bernardo D."/>
            <person name="Down T."/>
            <person name="Engstrom P."/>
            <person name="Fagiolini M."/>
            <person name="Faulkner G."/>
            <person name="Fletcher C.F."/>
            <person name="Fukushima T."/>
            <person name="Furuno M."/>
            <person name="Futaki S."/>
            <person name="Gariboldi M."/>
            <person name="Georgii-Hemming P."/>
            <person name="Gingeras T.R."/>
            <person name="Gojobori T."/>
            <person name="Green R.E."/>
            <person name="Gustincich S."/>
            <person name="Harbers M."/>
            <person name="Hayashi Y."/>
            <person name="Hensch T.K."/>
            <person name="Hirokawa N."/>
            <person name="Hill D."/>
            <person name="Huminiecki L."/>
            <person name="Iacono M."/>
            <person name="Ikeo K."/>
            <person name="Iwama A."/>
            <person name="Ishikawa T."/>
            <person name="Jakt M."/>
            <person name="Kanapin A."/>
            <person name="Katoh M."/>
            <person name="Kawasawa Y."/>
            <person name="Kelso J."/>
            <person name="Kitamura H."/>
            <person name="Kitano H."/>
            <person name="Kollias G."/>
            <person name="Krishnan S.P."/>
            <person name="Kruger A."/>
            <person name="Kummerfeld S.K."/>
            <person name="Kurochkin I.V."/>
            <person name="Lareau L.F."/>
            <person name="Lazarevic D."/>
            <person name="Lipovich L."/>
            <person name="Liu J."/>
            <person name="Liuni S."/>
            <person name="McWilliam S."/>
            <person name="Madan Babu M."/>
            <person name="Madera M."/>
            <person name="Marchionni L."/>
            <person name="Matsuda H."/>
            <person name="Matsuzawa S."/>
            <person name="Miki H."/>
            <person name="Mignone F."/>
            <person name="Miyake S."/>
            <person name="Morris K."/>
            <person name="Mottagui-Tabar S."/>
            <person name="Mulder N."/>
            <person name="Nakano N."/>
            <person name="Nakauchi H."/>
            <person name="Ng P."/>
            <person name="Nilsson R."/>
            <person name="Nishiguchi S."/>
            <person name="Nishikawa S."/>
            <person name="Nori F."/>
            <person name="Ohara O."/>
            <person name="Okazaki Y."/>
            <person name="Orlando V."/>
            <person name="Pang K.C."/>
            <person name="Pavan W.J."/>
            <person name="Pavesi G."/>
            <person name="Pesole G."/>
            <person name="Petrovsky N."/>
            <person name="Piazza S."/>
            <person name="Reed J."/>
            <person name="Reid J.F."/>
            <person name="Ring B.Z."/>
            <person name="Ringwald M."/>
            <person name="Rost B."/>
            <person name="Ruan Y."/>
            <person name="Salzberg S.L."/>
            <person name="Sandelin A."/>
            <person name="Schneider C."/>
            <person name="Schoenbach C."/>
            <person name="Sekiguchi K."/>
            <person name="Semple C.A."/>
            <person name="Seno S."/>
            <person name="Sessa L."/>
            <person name="Sheng Y."/>
            <person name="Shibata Y."/>
            <person name="Shimada H."/>
            <person name="Shimada K."/>
            <person name="Silva D."/>
            <person name="Sinclair B."/>
            <person name="Sperling S."/>
            <person name="Stupka E."/>
            <person name="Sugiura K."/>
            <person name="Sultana R."/>
            <person name="Takenaka Y."/>
            <person name="Taki K."/>
            <person name="Tammoja K."/>
            <person name="Tan S.L."/>
            <person name="Tang S."/>
            <person name="Taylor M.S."/>
            <person name="Tegner J."/>
            <person name="Teichmann S.A."/>
            <person name="Ueda H.R."/>
            <person name="van Nimwegen E."/>
            <person name="Verardo R."/>
            <person name="Wei C.L."/>
            <person name="Yagi K."/>
            <person name="Yamanishi H."/>
            <person name="Zabarovsky E."/>
            <person name="Zhu S."/>
            <person name="Zimmer A."/>
            <person name="Hide W."/>
            <person name="Bult C."/>
            <person name="Grimmond S.M."/>
            <person name="Teasdale R.D."/>
            <person name="Liu E.T."/>
            <person name="Brusic V."/>
            <person name="Quackenbush J."/>
            <person name="Wahlestedt C."/>
            <person name="Mattick J.S."/>
            <person name="Hume D.A."/>
            <person name="Kai C."/>
            <person name="Sasaki D."/>
            <person name="Tomaru Y."/>
            <person name="Fukuda S."/>
            <person name="Kanamori-Katayama M."/>
            <person name="Suzuki M."/>
            <person name="Aoki J."/>
            <person name="Arakawa T."/>
            <person name="Iida J."/>
            <person name="Imamura K."/>
            <person name="Itoh M."/>
            <person name="Kato T."/>
            <person name="Kawaji H."/>
            <person name="Kawagashira N."/>
            <person name="Kawashima T."/>
            <person name="Kojima M."/>
            <person name="Kondo S."/>
            <person name="Konno H."/>
            <person name="Nakano K."/>
            <person name="Ninomiya N."/>
            <person name="Nishio T."/>
            <person name="Okada M."/>
            <person name="Plessy C."/>
            <person name="Shibata K."/>
            <person name="Shiraki T."/>
            <person name="Suzuki S."/>
            <person name="Tagami M."/>
            <person name="Waki K."/>
            <person name="Watahiki A."/>
            <person name="Okamura-Oho Y."/>
            <person name="Suzuki H."/>
            <person name="Kawai J."/>
            <person name="Hayashizaki Y."/>
        </authorList>
    </citation>
    <scope>NUCLEOTIDE SEQUENCE [LARGE SCALE MRNA] (ISOFORM 1)</scope>
    <source>
        <strain>C57BL/6J</strain>
        <tissue>Amnion</tissue>
        <tissue>Embryo</tissue>
    </source>
</reference>
<reference key="5">
    <citation type="journal article" date="2009" name="PLoS Biol.">
        <title>Lineage-specific biology revealed by a finished genome assembly of the mouse.</title>
        <authorList>
            <person name="Church D.M."/>
            <person name="Goodstadt L."/>
            <person name="Hillier L.W."/>
            <person name="Zody M.C."/>
            <person name="Goldstein S."/>
            <person name="She X."/>
            <person name="Bult C.J."/>
            <person name="Agarwala R."/>
            <person name="Cherry J.L."/>
            <person name="DiCuccio M."/>
            <person name="Hlavina W."/>
            <person name="Kapustin Y."/>
            <person name="Meric P."/>
            <person name="Maglott D."/>
            <person name="Birtle Z."/>
            <person name="Marques A.C."/>
            <person name="Graves T."/>
            <person name="Zhou S."/>
            <person name="Teague B."/>
            <person name="Potamousis K."/>
            <person name="Churas C."/>
            <person name="Place M."/>
            <person name="Herschleb J."/>
            <person name="Runnheim R."/>
            <person name="Forrest D."/>
            <person name="Amos-Landgraf J."/>
            <person name="Schwartz D.C."/>
            <person name="Cheng Z."/>
            <person name="Lindblad-Toh K."/>
            <person name="Eichler E.E."/>
            <person name="Ponting C.P."/>
        </authorList>
    </citation>
    <scope>NUCLEOTIDE SEQUENCE [LARGE SCALE GENOMIC DNA]</scope>
    <source>
        <strain>C57BL/6J</strain>
    </source>
</reference>
<reference key="6">
    <citation type="journal article" date="2004" name="Genome Res.">
        <title>The status, quality, and expansion of the NIH full-length cDNA project: the Mammalian Gene Collection (MGC).</title>
        <authorList>
            <consortium name="The MGC Project Team"/>
        </authorList>
    </citation>
    <scope>NUCLEOTIDE SEQUENCE [LARGE SCALE MRNA] (ISOFORMS 1 AND 2)</scope>
    <source>
        <strain>C57BL/6J</strain>
        <strain>FVB/N-3</strain>
        <tissue>Brain</tissue>
        <tissue>Limb</tissue>
    </source>
</reference>
<reference key="7">
    <citation type="journal article" date="2007" name="Proc. Natl. Acad. Sci. U.S.A.">
        <title>Large-scale phosphorylation analysis of mouse liver.</title>
        <authorList>
            <person name="Villen J."/>
            <person name="Beausoleil S.A."/>
            <person name="Gerber S.A."/>
            <person name="Gygi S.P."/>
        </authorList>
    </citation>
    <scope>PHOSPHORYLATION [LARGE SCALE ANALYSIS] AT SER-158 (ISOFORM 3)</scope>
    <scope>IDENTIFICATION BY MASS SPECTROMETRY [LARGE SCALE ANALYSIS]</scope>
    <source>
        <tissue>Liver</tissue>
    </source>
</reference>
<reference key="8">
    <citation type="journal article" date="2010" name="Cell">
        <title>A tissue-specific atlas of mouse protein phosphorylation and expression.</title>
        <authorList>
            <person name="Huttlin E.L."/>
            <person name="Jedrychowski M.P."/>
            <person name="Elias J.E."/>
            <person name="Goswami T."/>
            <person name="Rad R."/>
            <person name="Beausoleil S.A."/>
            <person name="Villen J."/>
            <person name="Haas W."/>
            <person name="Sowa M.E."/>
            <person name="Gygi S.P."/>
        </authorList>
    </citation>
    <scope>PHOSPHORYLATION [LARGE SCALE ANALYSIS] AT SER-133</scope>
    <scope>PHOSPHORYLATION [LARGE SCALE ANALYSIS] AT SER-158 AND SER-160 (ISOFORM 3)</scope>
    <scope>IDENTIFICATION BY MASS SPECTROMETRY [LARGE SCALE ANALYSIS]</scope>
    <source>
        <tissue>Brain</tissue>
        <tissue>Brown adipose tissue</tissue>
        <tissue>Heart</tissue>
        <tissue>Kidney</tissue>
        <tissue>Lung</tissue>
        <tissue>Pancreas</tissue>
        <tissue>Spleen</tissue>
        <tissue>Testis</tissue>
    </source>
</reference>
<name>SRS10_MOUSE</name>
<accession>Q9R0U0</accession>
<accession>B1AV44</accession>
<accession>B1AV45</accession>
<accession>O70307</accession>
<accession>O88468</accession>
<accession>Q3TGW7</accession>
<accession>Q8CFZ1</accession>
<accession>Q9R0T9</accession>
<feature type="chain" id="PRO_0000081594" description="Serine/arginine-rich splicing factor 10">
    <location>
        <begin position="1"/>
        <end position="262"/>
    </location>
</feature>
<feature type="domain" description="RRM" evidence="2">
    <location>
        <begin position="10"/>
        <end position="88"/>
    </location>
</feature>
<feature type="region of interest" description="Disordered" evidence="3">
    <location>
        <begin position="116"/>
        <end position="262"/>
    </location>
</feature>
<feature type="compositionally biased region" description="Basic and acidic residues" evidence="3">
    <location>
        <begin position="116"/>
        <end position="126"/>
    </location>
</feature>
<feature type="compositionally biased region" description="Low complexity" evidence="3">
    <location>
        <begin position="134"/>
        <end position="150"/>
    </location>
</feature>
<feature type="compositionally biased region" description="Basic residues" evidence="3">
    <location>
        <begin position="165"/>
        <end position="186"/>
    </location>
</feature>
<feature type="compositionally biased region" description="Basic residues" evidence="3">
    <location>
        <begin position="194"/>
        <end position="207"/>
    </location>
</feature>
<feature type="compositionally biased region" description="Basic and acidic residues" evidence="3">
    <location>
        <begin position="209"/>
        <end position="234"/>
    </location>
</feature>
<feature type="compositionally biased region" description="Low complexity" evidence="3">
    <location>
        <begin position="252"/>
        <end position="262"/>
    </location>
</feature>
<feature type="modified residue" description="Phosphoserine" evidence="1">
    <location>
        <position position="23"/>
    </location>
</feature>
<feature type="modified residue" description="Phosphoserine" evidence="1">
    <location>
        <position position="106"/>
    </location>
</feature>
<feature type="modified residue" description="Phosphoserine" evidence="1">
    <location>
        <position position="108"/>
    </location>
</feature>
<feature type="modified residue" description="Phosphoserine" evidence="1">
    <location>
        <position position="129"/>
    </location>
</feature>
<feature type="modified residue" description="Phosphoserine" evidence="1">
    <location>
        <position position="131"/>
    </location>
</feature>
<feature type="modified residue" description="Phosphoserine" evidence="10">
    <location>
        <position position="133"/>
    </location>
</feature>
<feature type="modified residue" description="Phosphoserine" evidence="1">
    <location>
        <position position="158"/>
    </location>
</feature>
<feature type="modified residue" description="Phosphoserine" evidence="1">
    <location>
        <position position="160"/>
    </location>
</feature>
<feature type="splice variant" id="VSP_010426" description="In isoform 2." evidence="6">
    <location>
        <position position="147"/>
    </location>
</feature>
<feature type="splice variant" id="VSP_010427" description="In isoform 3." evidence="5 7">
    <original>FKHRNRSFSRSKSNSRSRS</original>
    <variation>PNCSWNTQYSSAYYTSRKI</variation>
    <location>
        <begin position="165"/>
        <end position="183"/>
    </location>
</feature>
<feature type="splice variant" id="VSP_010428" description="In isoform 3." evidence="5 7">
    <location>
        <begin position="184"/>
        <end position="262"/>
    </location>
</feature>
<feature type="sequence conflict" description="In Ref. 6; AAH37591." evidence="8" ref="6">
    <original>R</original>
    <variation>Q</variation>
    <location>
        <position position="22"/>
    </location>
</feature>
<feature type="sequence conflict" description="In Ref. 2; BAA35092/BAA35093." evidence="8" ref="2">
    <original>R</original>
    <variation>T</variation>
    <location>
        <position position="154"/>
    </location>
</feature>
<feature type="modified residue" description="Phosphoserine" evidence="9 10">
    <location sequence="Q9R0U0-3">
        <position position="158"/>
    </location>
</feature>
<feature type="modified residue" description="Phosphoserine" evidence="10">
    <location sequence="Q9R0U0-3">
        <position position="160"/>
    </location>
</feature>
<dbReference type="EMBL" id="AF042383">
    <property type="protein sequence ID" value="AAC70916.1"/>
    <property type="molecule type" value="mRNA"/>
</dbReference>
<dbReference type="EMBL" id="AB015894">
    <property type="protein sequence ID" value="BAA35092.1"/>
    <property type="molecule type" value="mRNA"/>
</dbReference>
<dbReference type="EMBL" id="AB015895">
    <property type="protein sequence ID" value="BAA35093.1"/>
    <property type="molecule type" value="mRNA"/>
</dbReference>
<dbReference type="EMBL" id="AF060490">
    <property type="protein sequence ID" value="AAC26715.1"/>
    <property type="molecule type" value="mRNA"/>
</dbReference>
<dbReference type="EMBL" id="AK014345">
    <property type="protein sequence ID" value="BAB29286.1"/>
    <property type="molecule type" value="mRNA"/>
</dbReference>
<dbReference type="EMBL" id="AK168524">
    <property type="protein sequence ID" value="BAE40403.1"/>
    <property type="molecule type" value="mRNA"/>
</dbReference>
<dbReference type="EMBL" id="AK168558">
    <property type="protein sequence ID" value="BAE40431.1"/>
    <property type="molecule type" value="mRNA"/>
</dbReference>
<dbReference type="EMBL" id="AL672076">
    <property type="status" value="NOT_ANNOTATED_CDS"/>
    <property type="molecule type" value="Genomic_DNA"/>
</dbReference>
<dbReference type="EMBL" id="BC037591">
    <property type="protein sequence ID" value="AAH37591.1"/>
    <property type="molecule type" value="mRNA"/>
</dbReference>
<dbReference type="EMBL" id="BC043060">
    <property type="protein sequence ID" value="AAH43060.1"/>
    <property type="molecule type" value="mRNA"/>
</dbReference>
<dbReference type="EMBL" id="BC083082">
    <property type="protein sequence ID" value="AAH83082.1"/>
    <property type="molecule type" value="mRNA"/>
</dbReference>
<dbReference type="CCDS" id="CCDS18791.1">
    <molecule id="Q9R0U0-3"/>
</dbReference>
<dbReference type="CCDS" id="CCDS38922.1">
    <molecule id="Q9R0U0-1"/>
</dbReference>
<dbReference type="CCDS" id="CCDS71493.1">
    <molecule id="Q9R0U0-2"/>
</dbReference>
<dbReference type="RefSeq" id="NP_001073856.1">
    <molecule id="Q9R0U0-1"/>
    <property type="nucleotide sequence ID" value="NM_001080387.2"/>
</dbReference>
<dbReference type="RefSeq" id="NP_001271124.1">
    <molecule id="Q9R0U0-2"/>
    <property type="nucleotide sequence ID" value="NM_001284195.1"/>
</dbReference>
<dbReference type="RefSeq" id="NP_001271125.1">
    <property type="nucleotide sequence ID" value="NM_001284196.1"/>
</dbReference>
<dbReference type="RefSeq" id="NP_034308.1">
    <molecule id="Q9R0U0-3"/>
    <property type="nucleotide sequence ID" value="NM_010178.3"/>
</dbReference>
<dbReference type="SMR" id="Q9R0U0"/>
<dbReference type="BioGRID" id="199597">
    <property type="interactions" value="8"/>
</dbReference>
<dbReference type="FunCoup" id="Q9R0U0">
    <property type="interactions" value="2009"/>
</dbReference>
<dbReference type="IntAct" id="Q9R0U0">
    <property type="interactions" value="2"/>
</dbReference>
<dbReference type="STRING" id="10090.ENSMUSP00000101479"/>
<dbReference type="GlyGen" id="Q9R0U0">
    <property type="glycosylation" value="2 sites, 1 N-linked glycan (1 site), 1 O-linked glycan (1 site)"/>
</dbReference>
<dbReference type="iPTMnet" id="Q9R0U0"/>
<dbReference type="PhosphoSitePlus" id="Q9R0U0"/>
<dbReference type="SwissPalm" id="Q9R0U0"/>
<dbReference type="jPOST" id="Q9R0U0"/>
<dbReference type="PaxDb" id="10090-ENSMUSP00000101479"/>
<dbReference type="ProteomicsDB" id="258612">
    <molecule id="Q9R0U0-1"/>
</dbReference>
<dbReference type="ProteomicsDB" id="258613">
    <molecule id="Q9R0U0-2"/>
</dbReference>
<dbReference type="ProteomicsDB" id="258614">
    <molecule id="Q9R0U0-3"/>
</dbReference>
<dbReference type="Pumba" id="Q9R0U0"/>
<dbReference type="Antibodypedia" id="60384">
    <property type="antibodies" value="272 antibodies from 26 providers"/>
</dbReference>
<dbReference type="DNASU" id="14105"/>
<dbReference type="Ensembl" id="ENSMUST00000097844.9">
    <molecule id="Q9R0U0-2"/>
    <property type="protein sequence ID" value="ENSMUSP00000095455.3"/>
    <property type="gene ID" value="ENSMUSG00000028676.18"/>
</dbReference>
<dbReference type="Ensembl" id="ENSMUST00000105853.10">
    <molecule id="Q9R0U0-1"/>
    <property type="protein sequence ID" value="ENSMUSP00000101479.4"/>
    <property type="gene ID" value="ENSMUSG00000028676.18"/>
</dbReference>
<dbReference type="Ensembl" id="ENSMUST00000126641.2">
    <molecule id="Q9R0U0-3"/>
    <property type="protein sequence ID" value="ENSMUSP00000114564.2"/>
    <property type="gene ID" value="ENSMUSG00000028676.18"/>
</dbReference>
<dbReference type="GeneID" id="14105"/>
<dbReference type="KEGG" id="mmu:14105"/>
<dbReference type="UCSC" id="uc008vhd.2">
    <molecule id="Q9R0U0-2"/>
    <property type="organism name" value="mouse"/>
</dbReference>
<dbReference type="UCSC" id="uc033ifn.1">
    <molecule id="Q9R0U0-1"/>
    <property type="organism name" value="mouse"/>
</dbReference>
<dbReference type="AGR" id="MGI:1333805"/>
<dbReference type="CTD" id="10772"/>
<dbReference type="MGI" id="MGI:1333805">
    <property type="gene designation" value="Srsf10"/>
</dbReference>
<dbReference type="VEuPathDB" id="HostDB:ENSMUSG00000028676"/>
<dbReference type="eggNOG" id="KOG0118">
    <property type="taxonomic scope" value="Eukaryota"/>
</dbReference>
<dbReference type="GeneTree" id="ENSGT00940000154450"/>
<dbReference type="HOGENOM" id="CLU_012062_10_2_1"/>
<dbReference type="InParanoid" id="Q9R0U0"/>
<dbReference type="OMA" id="YMHQRNQ"/>
<dbReference type="OrthoDB" id="439808at2759"/>
<dbReference type="PhylomeDB" id="Q9R0U0"/>
<dbReference type="TreeFam" id="TF351864"/>
<dbReference type="Reactome" id="R-MMU-72163">
    <property type="pathway name" value="mRNA Splicing - Major Pathway"/>
</dbReference>
<dbReference type="Reactome" id="R-MMU-72203">
    <property type="pathway name" value="Processing of Capped Intron-Containing Pre-mRNA"/>
</dbReference>
<dbReference type="BioGRID-ORCS" id="14105">
    <property type="hits" value="24 hits in 80 CRISPR screens"/>
</dbReference>
<dbReference type="CD-CODE" id="764D0258">
    <property type="entry name" value="Neuronal RNP granule"/>
</dbReference>
<dbReference type="ChiTaRS" id="Srsf10">
    <property type="organism name" value="mouse"/>
</dbReference>
<dbReference type="PRO" id="PR:Q9R0U0"/>
<dbReference type="Proteomes" id="UP000000589">
    <property type="component" value="Chromosome 4"/>
</dbReference>
<dbReference type="RNAct" id="Q9R0U0">
    <property type="molecule type" value="protein"/>
</dbReference>
<dbReference type="Bgee" id="ENSMUSG00000028676">
    <property type="expression patterns" value="Expressed in embryonic post-anal tail and 271 other cell types or tissues"/>
</dbReference>
<dbReference type="ExpressionAtlas" id="Q9R0U0">
    <property type="expression patterns" value="baseline and differential"/>
</dbReference>
<dbReference type="GO" id="GO:0043679">
    <property type="term" value="C:axon terminus"/>
    <property type="evidence" value="ECO:0007669"/>
    <property type="project" value="Ensembl"/>
</dbReference>
<dbReference type="GO" id="GO:0005829">
    <property type="term" value="C:cytosol"/>
    <property type="evidence" value="ECO:0007669"/>
    <property type="project" value="GOC"/>
</dbReference>
<dbReference type="GO" id="GO:0030425">
    <property type="term" value="C:dendrite"/>
    <property type="evidence" value="ECO:0007669"/>
    <property type="project" value="Ensembl"/>
</dbReference>
<dbReference type="GO" id="GO:0043025">
    <property type="term" value="C:neuronal cell body"/>
    <property type="evidence" value="ECO:0007669"/>
    <property type="project" value="Ensembl"/>
</dbReference>
<dbReference type="GO" id="GO:0016607">
    <property type="term" value="C:nuclear speck"/>
    <property type="evidence" value="ECO:0000250"/>
    <property type="project" value="UniProtKB"/>
</dbReference>
<dbReference type="GO" id="GO:0005654">
    <property type="term" value="C:nucleoplasm"/>
    <property type="evidence" value="ECO:0000314"/>
    <property type="project" value="UniProtKB"/>
</dbReference>
<dbReference type="GO" id="GO:0003723">
    <property type="term" value="F:RNA binding"/>
    <property type="evidence" value="ECO:0000250"/>
    <property type="project" value="UniProtKB"/>
</dbReference>
<dbReference type="GO" id="GO:0051082">
    <property type="term" value="F:unfolded protein binding"/>
    <property type="evidence" value="ECO:0000303"/>
    <property type="project" value="UniProtKB"/>
</dbReference>
<dbReference type="GO" id="GO:0016482">
    <property type="term" value="P:cytosolic transport"/>
    <property type="evidence" value="ECO:0000314"/>
    <property type="project" value="UniProtKB"/>
</dbReference>
<dbReference type="GO" id="GO:0006376">
    <property type="term" value="P:mRNA splice site recognition"/>
    <property type="evidence" value="ECO:0000250"/>
    <property type="project" value="UniProtKB"/>
</dbReference>
<dbReference type="GO" id="GO:0048025">
    <property type="term" value="P:negative regulation of mRNA splicing, via spliceosome"/>
    <property type="evidence" value="ECO:0000314"/>
    <property type="project" value="UniProtKB"/>
</dbReference>
<dbReference type="GO" id="GO:0006355">
    <property type="term" value="P:regulation of DNA-templated transcription"/>
    <property type="evidence" value="ECO:0000303"/>
    <property type="project" value="UniProtKB"/>
</dbReference>
<dbReference type="GO" id="GO:0000375">
    <property type="term" value="P:RNA splicing, via transesterification reactions"/>
    <property type="evidence" value="ECO:0000314"/>
    <property type="project" value="UniProtKB"/>
</dbReference>
<dbReference type="FunFam" id="3.30.70.330:FF:000155">
    <property type="entry name" value="serine/arginine-rich splicing factor 10 isoform X1"/>
    <property type="match status" value="1"/>
</dbReference>
<dbReference type="Gene3D" id="3.30.70.330">
    <property type="match status" value="1"/>
</dbReference>
<dbReference type="InterPro" id="IPR012677">
    <property type="entry name" value="Nucleotide-bd_a/b_plait_sf"/>
</dbReference>
<dbReference type="InterPro" id="IPR035979">
    <property type="entry name" value="RBD_domain_sf"/>
</dbReference>
<dbReference type="InterPro" id="IPR050441">
    <property type="entry name" value="RBM"/>
</dbReference>
<dbReference type="InterPro" id="IPR000504">
    <property type="entry name" value="RRM_dom"/>
</dbReference>
<dbReference type="PANTHER" id="PTHR48034">
    <property type="entry name" value="TRANSFORMER-2 SEX-DETERMINING PROTEIN-RELATED"/>
    <property type="match status" value="1"/>
</dbReference>
<dbReference type="Pfam" id="PF00076">
    <property type="entry name" value="RRM_1"/>
    <property type="match status" value="1"/>
</dbReference>
<dbReference type="SMART" id="SM00360">
    <property type="entry name" value="RRM"/>
    <property type="match status" value="1"/>
</dbReference>
<dbReference type="SUPFAM" id="SSF54928">
    <property type="entry name" value="RNA-binding domain, RBD"/>
    <property type="match status" value="1"/>
</dbReference>
<dbReference type="PROSITE" id="PS50102">
    <property type="entry name" value="RRM"/>
    <property type="match status" value="1"/>
</dbReference>
<protein>
    <recommendedName>
        <fullName>Serine/arginine-rich splicing factor 10</fullName>
    </recommendedName>
    <alternativeName>
        <fullName>FUS-interacting serine-arginine-rich protein 1</fullName>
    </alternativeName>
    <alternativeName>
        <fullName>Neural-salient serine/arginine-rich protein</fullName>
    </alternativeName>
    <alternativeName>
        <fullName>Neural-specific SR protein</fullName>
    </alternativeName>
    <alternativeName>
        <fullName>Splicing factor, arginine/serine-rich 13A</fullName>
    </alternativeName>
    <alternativeName>
        <fullName>TLS-associated protein with Ser-Arg repeats</fullName>
        <shortName>TASR</shortName>
        <shortName>TLS-associated protein with SR repeats</shortName>
    </alternativeName>
    <alternativeName>
        <fullName>TLS-associated serine-arginine protein</fullName>
        <shortName>TLS-associated SR protein</shortName>
    </alternativeName>
</protein>
<evidence type="ECO:0000250" key="1">
    <source>
        <dbReference type="UniProtKB" id="O75494"/>
    </source>
</evidence>
<evidence type="ECO:0000255" key="2">
    <source>
        <dbReference type="PROSITE-ProRule" id="PRU00176"/>
    </source>
</evidence>
<evidence type="ECO:0000256" key="3">
    <source>
        <dbReference type="SAM" id="MobiDB-lite"/>
    </source>
</evidence>
<evidence type="ECO:0000269" key="4">
    <source>
    </source>
</evidence>
<evidence type="ECO:0000303" key="5">
    <source>
    </source>
</evidence>
<evidence type="ECO:0000303" key="6">
    <source>
    </source>
</evidence>
<evidence type="ECO:0000303" key="7">
    <source>
    </source>
</evidence>
<evidence type="ECO:0000305" key="8"/>
<evidence type="ECO:0007744" key="9">
    <source>
    </source>
</evidence>
<evidence type="ECO:0007744" key="10">
    <source>
    </source>
</evidence>
<keyword id="KW-0025">Alternative splicing</keyword>
<keyword id="KW-0507">mRNA processing</keyword>
<keyword id="KW-0508">mRNA splicing</keyword>
<keyword id="KW-0539">Nucleus</keyword>
<keyword id="KW-0597">Phosphoprotein</keyword>
<keyword id="KW-1185">Reference proteome</keyword>
<keyword id="KW-0694">RNA-binding</keyword>